<keyword id="KW-0028">Amino-acid biosynthesis</keyword>
<keyword id="KW-0057">Aromatic amino acid biosynthesis</keyword>
<keyword id="KW-0456">Lyase</keyword>
<keyword id="KW-0663">Pyridoxal phosphate</keyword>
<keyword id="KW-1185">Reference proteome</keyword>
<keyword id="KW-0822">Tryptophan biosynthesis</keyword>
<protein>
    <recommendedName>
        <fullName evidence="1">Tryptophan synthase beta chain</fullName>
        <ecNumber evidence="1">4.2.1.20</ecNumber>
    </recommendedName>
</protein>
<dbReference type="EC" id="4.2.1.20" evidence="1"/>
<dbReference type="EMBL" id="AE007317">
    <property type="protein sequence ID" value="AAL00435.1"/>
    <property type="molecule type" value="Genomic_DNA"/>
</dbReference>
<dbReference type="PIR" id="F98075">
    <property type="entry name" value="F98075"/>
</dbReference>
<dbReference type="RefSeq" id="NP_359224.1">
    <property type="nucleotide sequence ID" value="NC_003098.1"/>
</dbReference>
<dbReference type="RefSeq" id="WP_000331283.1">
    <property type="nucleotide sequence ID" value="NC_003098.1"/>
</dbReference>
<dbReference type="SMR" id="Q8DNM8"/>
<dbReference type="STRING" id="171101.spr1632"/>
<dbReference type="KEGG" id="spr:spr1632"/>
<dbReference type="PATRIC" id="fig|171101.6.peg.1761"/>
<dbReference type="eggNOG" id="COG0133">
    <property type="taxonomic scope" value="Bacteria"/>
</dbReference>
<dbReference type="HOGENOM" id="CLU_016734_3_1_9"/>
<dbReference type="UniPathway" id="UPA00035">
    <property type="reaction ID" value="UER00044"/>
</dbReference>
<dbReference type="Proteomes" id="UP000000586">
    <property type="component" value="Chromosome"/>
</dbReference>
<dbReference type="GO" id="GO:0005737">
    <property type="term" value="C:cytoplasm"/>
    <property type="evidence" value="ECO:0000318"/>
    <property type="project" value="GO_Central"/>
</dbReference>
<dbReference type="GO" id="GO:0004834">
    <property type="term" value="F:tryptophan synthase activity"/>
    <property type="evidence" value="ECO:0007669"/>
    <property type="project" value="UniProtKB-UniRule"/>
</dbReference>
<dbReference type="GO" id="GO:0000162">
    <property type="term" value="P:L-tryptophan biosynthetic process"/>
    <property type="evidence" value="ECO:0000318"/>
    <property type="project" value="GO_Central"/>
</dbReference>
<dbReference type="CDD" id="cd06446">
    <property type="entry name" value="Trp-synth_B"/>
    <property type="match status" value="1"/>
</dbReference>
<dbReference type="FunFam" id="3.40.50.1100:FF:000001">
    <property type="entry name" value="Tryptophan synthase beta chain"/>
    <property type="match status" value="1"/>
</dbReference>
<dbReference type="FunFam" id="3.40.50.1100:FF:000004">
    <property type="entry name" value="Tryptophan synthase beta chain"/>
    <property type="match status" value="1"/>
</dbReference>
<dbReference type="Gene3D" id="3.40.50.1100">
    <property type="match status" value="2"/>
</dbReference>
<dbReference type="HAMAP" id="MF_00133">
    <property type="entry name" value="Trp_synth_beta"/>
    <property type="match status" value="1"/>
</dbReference>
<dbReference type="InterPro" id="IPR006653">
    <property type="entry name" value="Trp_synth_b_CS"/>
</dbReference>
<dbReference type="InterPro" id="IPR006654">
    <property type="entry name" value="Trp_synth_beta"/>
</dbReference>
<dbReference type="InterPro" id="IPR023026">
    <property type="entry name" value="Trp_synth_beta/beta-like"/>
</dbReference>
<dbReference type="InterPro" id="IPR001926">
    <property type="entry name" value="TrpB-like_PALP"/>
</dbReference>
<dbReference type="InterPro" id="IPR036052">
    <property type="entry name" value="TrpB-like_PALP_sf"/>
</dbReference>
<dbReference type="NCBIfam" id="TIGR00263">
    <property type="entry name" value="trpB"/>
    <property type="match status" value="1"/>
</dbReference>
<dbReference type="PANTHER" id="PTHR48077:SF3">
    <property type="entry name" value="TRYPTOPHAN SYNTHASE"/>
    <property type="match status" value="1"/>
</dbReference>
<dbReference type="PANTHER" id="PTHR48077">
    <property type="entry name" value="TRYPTOPHAN SYNTHASE-RELATED"/>
    <property type="match status" value="1"/>
</dbReference>
<dbReference type="Pfam" id="PF00291">
    <property type="entry name" value="PALP"/>
    <property type="match status" value="1"/>
</dbReference>
<dbReference type="PIRSF" id="PIRSF001413">
    <property type="entry name" value="Trp_syn_beta"/>
    <property type="match status" value="1"/>
</dbReference>
<dbReference type="SUPFAM" id="SSF53686">
    <property type="entry name" value="Tryptophan synthase beta subunit-like PLP-dependent enzymes"/>
    <property type="match status" value="1"/>
</dbReference>
<dbReference type="PROSITE" id="PS00168">
    <property type="entry name" value="TRP_SYNTHASE_BETA"/>
    <property type="match status" value="1"/>
</dbReference>
<evidence type="ECO:0000255" key="1">
    <source>
        <dbReference type="HAMAP-Rule" id="MF_00133"/>
    </source>
</evidence>
<sequence>MAYQEPNKDGFYGKFGGRFVPETLMTAVLELEKAYRESQADPSFQEELNQLLRQYVGRETPLYYAKNLTQHIGGAKIYLKREDLNHTGAHKINNALGQVWLAKRMGKKKIIAETGAGQHGVATATAAALFNMECIIYMGEEDVKRQALNVFRMELLGAKVEAVTDGSRVLKDAVNAALRSWVANIDDTHYILGSTLGPHPFPEIVRDFQSVIGREAKQQYRDLTGQNLPDALVACVGGGSNAIGLFHPFVEDESVAMYGAEAAGLGVDTEHHAATLTKGRPGVLHGSLMDVLQDAHGQILEAFSISAGLDYPGIGPEHSHYHDIKRASYVPVTDEEALEGFQLLSRVEGIIPALESSHAIAFAVKLAKELGPEKSMIVCLSGRGDKDVVQVKDRLEADAAKKGEAHA</sequence>
<accession>Q8DNM8</accession>
<organism>
    <name type="scientific">Streptococcus pneumoniae (strain ATCC BAA-255 / R6)</name>
    <dbReference type="NCBI Taxonomy" id="171101"/>
    <lineage>
        <taxon>Bacteria</taxon>
        <taxon>Bacillati</taxon>
        <taxon>Bacillota</taxon>
        <taxon>Bacilli</taxon>
        <taxon>Lactobacillales</taxon>
        <taxon>Streptococcaceae</taxon>
        <taxon>Streptococcus</taxon>
    </lineage>
</organism>
<name>TRPB_STRR6</name>
<gene>
    <name evidence="1" type="primary">trpB</name>
    <name type="ordered locus">spr1632</name>
</gene>
<proteinExistence type="inferred from homology"/>
<feature type="chain" id="PRO_0000099009" description="Tryptophan synthase beta chain">
    <location>
        <begin position="1"/>
        <end position="407"/>
    </location>
</feature>
<feature type="modified residue" description="N6-(pyridoxal phosphate)lysine" evidence="1">
    <location>
        <position position="91"/>
    </location>
</feature>
<reference key="1">
    <citation type="journal article" date="2001" name="J. Bacteriol.">
        <title>Genome of the bacterium Streptococcus pneumoniae strain R6.</title>
        <authorList>
            <person name="Hoskins J."/>
            <person name="Alborn W.E. Jr."/>
            <person name="Arnold J."/>
            <person name="Blaszczak L.C."/>
            <person name="Burgett S."/>
            <person name="DeHoff B.S."/>
            <person name="Estrem S.T."/>
            <person name="Fritz L."/>
            <person name="Fu D.-J."/>
            <person name="Fuller W."/>
            <person name="Geringer C."/>
            <person name="Gilmour R."/>
            <person name="Glass J.S."/>
            <person name="Khoja H."/>
            <person name="Kraft A.R."/>
            <person name="Lagace R.E."/>
            <person name="LeBlanc D.J."/>
            <person name="Lee L.N."/>
            <person name="Lefkowitz E.J."/>
            <person name="Lu J."/>
            <person name="Matsushima P."/>
            <person name="McAhren S.M."/>
            <person name="McHenney M."/>
            <person name="McLeaster K."/>
            <person name="Mundy C.W."/>
            <person name="Nicas T.I."/>
            <person name="Norris F.H."/>
            <person name="O'Gara M."/>
            <person name="Peery R.B."/>
            <person name="Robertson G.T."/>
            <person name="Rockey P."/>
            <person name="Sun P.-M."/>
            <person name="Winkler M.E."/>
            <person name="Yang Y."/>
            <person name="Young-Bellido M."/>
            <person name="Zhao G."/>
            <person name="Zook C.A."/>
            <person name="Baltz R.H."/>
            <person name="Jaskunas S.R."/>
            <person name="Rosteck P.R. Jr."/>
            <person name="Skatrud P.L."/>
            <person name="Glass J.I."/>
        </authorList>
    </citation>
    <scope>NUCLEOTIDE SEQUENCE [LARGE SCALE GENOMIC DNA]</scope>
    <source>
        <strain>ATCC BAA-255 / R6</strain>
    </source>
</reference>
<comment type="function">
    <text evidence="1">The beta subunit is responsible for the synthesis of L-tryptophan from indole and L-serine.</text>
</comment>
<comment type="catalytic activity">
    <reaction evidence="1">
        <text>(1S,2R)-1-C-(indol-3-yl)glycerol 3-phosphate + L-serine = D-glyceraldehyde 3-phosphate + L-tryptophan + H2O</text>
        <dbReference type="Rhea" id="RHEA:10532"/>
        <dbReference type="ChEBI" id="CHEBI:15377"/>
        <dbReference type="ChEBI" id="CHEBI:33384"/>
        <dbReference type="ChEBI" id="CHEBI:57912"/>
        <dbReference type="ChEBI" id="CHEBI:58866"/>
        <dbReference type="ChEBI" id="CHEBI:59776"/>
        <dbReference type="EC" id="4.2.1.20"/>
    </reaction>
</comment>
<comment type="cofactor">
    <cofactor evidence="1">
        <name>pyridoxal 5'-phosphate</name>
        <dbReference type="ChEBI" id="CHEBI:597326"/>
    </cofactor>
</comment>
<comment type="pathway">
    <text evidence="1">Amino-acid biosynthesis; L-tryptophan biosynthesis; L-tryptophan from chorismate: step 5/5.</text>
</comment>
<comment type="subunit">
    <text evidence="1">Tetramer of two alpha and two beta chains.</text>
</comment>
<comment type="similarity">
    <text evidence="1">Belongs to the TrpB family.</text>
</comment>